<comment type="catalytic activity">
    <reaction evidence="1">
        <text>tRNA(Gly) + glycine + ATP = glycyl-tRNA(Gly) + AMP + diphosphate</text>
        <dbReference type="Rhea" id="RHEA:16013"/>
        <dbReference type="Rhea" id="RHEA-COMP:9664"/>
        <dbReference type="Rhea" id="RHEA-COMP:9683"/>
        <dbReference type="ChEBI" id="CHEBI:30616"/>
        <dbReference type="ChEBI" id="CHEBI:33019"/>
        <dbReference type="ChEBI" id="CHEBI:57305"/>
        <dbReference type="ChEBI" id="CHEBI:78442"/>
        <dbReference type="ChEBI" id="CHEBI:78522"/>
        <dbReference type="ChEBI" id="CHEBI:456215"/>
        <dbReference type="EC" id="6.1.1.14"/>
    </reaction>
</comment>
<comment type="subunit">
    <text evidence="1">Tetramer of two alpha and two beta subunits.</text>
</comment>
<comment type="subcellular location">
    <subcellularLocation>
        <location evidence="1">Cytoplasm</location>
    </subcellularLocation>
</comment>
<comment type="similarity">
    <text evidence="1">Belongs to the class-II aminoacyl-tRNA synthetase family.</text>
</comment>
<feature type="chain" id="PRO_1000204588" description="Glycine--tRNA ligase alpha subunit">
    <location>
        <begin position="1"/>
        <end position="302"/>
    </location>
</feature>
<reference key="1">
    <citation type="submission" date="2009-03" db="EMBL/GenBank/DDBJ databases">
        <title>Complete genome sequence of Edwardsiella ictaluri 93-146.</title>
        <authorList>
            <person name="Williams M.L."/>
            <person name="Gillaspy A.F."/>
            <person name="Dyer D.W."/>
            <person name="Thune R.L."/>
            <person name="Waldbieser G.C."/>
            <person name="Schuster S.C."/>
            <person name="Gipson J."/>
            <person name="Zaitshik J."/>
            <person name="Landry C."/>
            <person name="Lawrence M.L."/>
        </authorList>
    </citation>
    <scope>NUCLEOTIDE SEQUENCE [LARGE SCALE GENOMIC DNA]</scope>
    <source>
        <strain>93-146</strain>
    </source>
</reference>
<accession>C5B996</accession>
<proteinExistence type="inferred from homology"/>
<organism>
    <name type="scientific">Edwardsiella ictaluri (strain 93-146)</name>
    <dbReference type="NCBI Taxonomy" id="634503"/>
    <lineage>
        <taxon>Bacteria</taxon>
        <taxon>Pseudomonadati</taxon>
        <taxon>Pseudomonadota</taxon>
        <taxon>Gammaproteobacteria</taxon>
        <taxon>Enterobacterales</taxon>
        <taxon>Hafniaceae</taxon>
        <taxon>Edwardsiella</taxon>
    </lineage>
</organism>
<sequence>MQKFDIKTFQGLILTLQDYWARQGCTIVQPLDMEVGAGTSHPMTCLRALGPEPMATAYVQPSRRPTDGRYGENPNRLQHYYQFQVVIKPSPDNIQELYLGSLKALGLDPTVHDIRFVEDNWENPTLGAWGLGWEVWLNGMEVTQFTYFQQVGGLECKPVTGEITYGLERLAMYIQGVDSVYDLVWSDGPLGKTTYGDVFHQNEVEQSTYNFEYADVDFLFACFEQYEKEARMLLELEHPLPLPAYERILKAAHSFNLLDARKAISVTERQRYILRIRTLTKMVAEAYYASREALGFPMCKKD</sequence>
<evidence type="ECO:0000255" key="1">
    <source>
        <dbReference type="HAMAP-Rule" id="MF_00254"/>
    </source>
</evidence>
<keyword id="KW-0030">Aminoacyl-tRNA synthetase</keyword>
<keyword id="KW-0067">ATP-binding</keyword>
<keyword id="KW-0963">Cytoplasm</keyword>
<keyword id="KW-0436">Ligase</keyword>
<keyword id="KW-0547">Nucleotide-binding</keyword>
<keyword id="KW-0648">Protein biosynthesis</keyword>
<protein>
    <recommendedName>
        <fullName evidence="1">Glycine--tRNA ligase alpha subunit</fullName>
        <ecNumber evidence="1">6.1.1.14</ecNumber>
    </recommendedName>
    <alternativeName>
        <fullName evidence="1">Glycyl-tRNA synthetase alpha subunit</fullName>
        <shortName evidence="1">GlyRS</shortName>
    </alternativeName>
</protein>
<dbReference type="EC" id="6.1.1.14" evidence="1"/>
<dbReference type="EMBL" id="CP001600">
    <property type="protein sequence ID" value="ACR67276.1"/>
    <property type="molecule type" value="Genomic_DNA"/>
</dbReference>
<dbReference type="RefSeq" id="WP_012846896.1">
    <property type="nucleotide sequence ID" value="NZ_CP169062.1"/>
</dbReference>
<dbReference type="SMR" id="C5B996"/>
<dbReference type="STRING" id="67780.B6E78_11255"/>
<dbReference type="GeneID" id="72526909"/>
<dbReference type="KEGG" id="eic:NT01EI_0015"/>
<dbReference type="HOGENOM" id="CLU_057066_1_0_6"/>
<dbReference type="OrthoDB" id="9802183at2"/>
<dbReference type="Proteomes" id="UP000001485">
    <property type="component" value="Chromosome"/>
</dbReference>
<dbReference type="GO" id="GO:0005829">
    <property type="term" value="C:cytosol"/>
    <property type="evidence" value="ECO:0007669"/>
    <property type="project" value="TreeGrafter"/>
</dbReference>
<dbReference type="GO" id="GO:0005524">
    <property type="term" value="F:ATP binding"/>
    <property type="evidence" value="ECO:0007669"/>
    <property type="project" value="UniProtKB-UniRule"/>
</dbReference>
<dbReference type="GO" id="GO:0004820">
    <property type="term" value="F:glycine-tRNA ligase activity"/>
    <property type="evidence" value="ECO:0007669"/>
    <property type="project" value="UniProtKB-UniRule"/>
</dbReference>
<dbReference type="GO" id="GO:0006426">
    <property type="term" value="P:glycyl-tRNA aminoacylation"/>
    <property type="evidence" value="ECO:0007669"/>
    <property type="project" value="UniProtKB-UniRule"/>
</dbReference>
<dbReference type="CDD" id="cd00733">
    <property type="entry name" value="GlyRS_alpha_core"/>
    <property type="match status" value="1"/>
</dbReference>
<dbReference type="FunFam" id="1.20.58.180:FF:000001">
    <property type="entry name" value="Glycine--tRNA ligase alpha subunit"/>
    <property type="match status" value="1"/>
</dbReference>
<dbReference type="FunFam" id="3.30.930.10:FF:000006">
    <property type="entry name" value="Glycine--tRNA ligase alpha subunit"/>
    <property type="match status" value="1"/>
</dbReference>
<dbReference type="Gene3D" id="3.30.930.10">
    <property type="entry name" value="Bira Bifunctional Protein, Domain 2"/>
    <property type="match status" value="1"/>
</dbReference>
<dbReference type="Gene3D" id="1.20.58.180">
    <property type="entry name" value="Class II aaRS and biotin synthetases, domain 2"/>
    <property type="match status" value="1"/>
</dbReference>
<dbReference type="HAMAP" id="MF_00254">
    <property type="entry name" value="Gly_tRNA_synth_alpha"/>
    <property type="match status" value="1"/>
</dbReference>
<dbReference type="InterPro" id="IPR045864">
    <property type="entry name" value="aa-tRNA-synth_II/BPL/LPL"/>
</dbReference>
<dbReference type="InterPro" id="IPR006194">
    <property type="entry name" value="Gly-tRNA-synth_heterodimer"/>
</dbReference>
<dbReference type="InterPro" id="IPR002310">
    <property type="entry name" value="Gly-tRNA_ligase_asu"/>
</dbReference>
<dbReference type="NCBIfam" id="TIGR00388">
    <property type="entry name" value="glyQ"/>
    <property type="match status" value="1"/>
</dbReference>
<dbReference type="NCBIfam" id="NF006827">
    <property type="entry name" value="PRK09348.1"/>
    <property type="match status" value="1"/>
</dbReference>
<dbReference type="PANTHER" id="PTHR30075:SF2">
    <property type="entry name" value="GLYCINE--TRNA LIGASE, CHLOROPLASTIC_MITOCHONDRIAL 2"/>
    <property type="match status" value="1"/>
</dbReference>
<dbReference type="PANTHER" id="PTHR30075">
    <property type="entry name" value="GLYCYL-TRNA SYNTHETASE"/>
    <property type="match status" value="1"/>
</dbReference>
<dbReference type="Pfam" id="PF02091">
    <property type="entry name" value="tRNA-synt_2e"/>
    <property type="match status" value="1"/>
</dbReference>
<dbReference type="PRINTS" id="PR01044">
    <property type="entry name" value="TRNASYNTHGA"/>
</dbReference>
<dbReference type="SUPFAM" id="SSF55681">
    <property type="entry name" value="Class II aaRS and biotin synthetases"/>
    <property type="match status" value="1"/>
</dbReference>
<dbReference type="PROSITE" id="PS50861">
    <property type="entry name" value="AA_TRNA_LIGASE_II_GLYAB"/>
    <property type="match status" value="1"/>
</dbReference>
<gene>
    <name evidence="1" type="primary">glyQ</name>
    <name type="ordered locus">NT01EI_0015</name>
</gene>
<name>SYGA_EDWI9</name>